<keyword id="KW-0511">Multifunctional enzyme</keyword>
<keyword id="KW-0560">Oxidoreductase</keyword>
<keyword id="KW-0596">Phosphopantetheine</keyword>
<keyword id="KW-0597">Phosphoprotein</keyword>
<keyword id="KW-1185">Reference proteome</keyword>
<keyword id="KW-0808">Transferase</keyword>
<feature type="chain" id="PRO_0000438785" description="Highly reducing polyketide synthase ZEA2">
    <location>
        <begin position="1"/>
        <end position="2352"/>
    </location>
</feature>
<feature type="domain" description="Ketosynthase family 3 (KS3)" evidence="3 15">
    <location>
        <begin position="9"/>
        <end position="433"/>
    </location>
</feature>
<feature type="domain" description="PKS/mFAS DH" evidence="4">
    <location>
        <begin position="923"/>
        <end position="1242"/>
    </location>
</feature>
<feature type="domain" description="Carrier" evidence="2 15">
    <location>
        <begin position="2269"/>
        <end position="2346"/>
    </location>
</feature>
<feature type="region of interest" description="Malonyl-CoA:ACP transacylase (MAT) domain" evidence="1 15">
    <location>
        <begin position="544"/>
        <end position="875"/>
    </location>
</feature>
<feature type="region of interest" description="N-terminal hotdog fold" evidence="4">
    <location>
        <begin position="923"/>
        <end position="1058"/>
    </location>
</feature>
<feature type="region of interest" description="Dehydratase (DH) domain" evidence="1 15">
    <location>
        <begin position="925"/>
        <end position="1237"/>
    </location>
</feature>
<feature type="region of interest" description="C-terminal hotdog fold" evidence="4">
    <location>
        <begin position="1086"/>
        <end position="1242"/>
    </location>
</feature>
<feature type="region of interest" description="Enoylreductase (ER) domain" evidence="1 15">
    <location>
        <begin position="1643"/>
        <end position="1955"/>
    </location>
</feature>
<feature type="region of interest" description="Catalytic ketoreductase (KRc) domain" evidence="1 15">
    <location>
        <begin position="1979"/>
        <end position="2159"/>
    </location>
</feature>
<feature type="active site" description="For beta-ketoacyl synthase activity" evidence="3">
    <location>
        <position position="181"/>
    </location>
</feature>
<feature type="active site" description="For beta-ketoacyl synthase activity" evidence="3">
    <location>
        <position position="316"/>
    </location>
</feature>
<feature type="active site" description="For beta-ketoacyl synthase activity" evidence="3">
    <location>
        <position position="356"/>
    </location>
</feature>
<feature type="active site" description="For malonyltransferase activity" evidence="5">
    <location>
        <position position="634"/>
    </location>
</feature>
<feature type="active site" description="Proton acceptor; for dehydratase activity" evidence="4">
    <location>
        <position position="955"/>
    </location>
</feature>
<feature type="active site" description="Proton donor; for dehydratase activity" evidence="4">
    <location>
        <position position="1152"/>
    </location>
</feature>
<feature type="modified residue" description="O-(pantetheine 4'-phosphoryl)serine" evidence="2">
    <location>
        <position position="2306"/>
    </location>
</feature>
<name>ZEA2_GIBZE</name>
<gene>
    <name evidence="12" type="primary">ZEA2</name>
    <name evidence="11" type="synonym">PKS13</name>
    <name type="ORF">FGRAMPH1_01T05751</name>
    <name type="ORF">FGSG_02396</name>
    <name type="ORF">FGSG_12126</name>
</gene>
<organism>
    <name type="scientific">Gibberella zeae (strain ATCC MYA-4620 / CBS 123657 / FGSC 9075 / NRRL 31084 / PH-1)</name>
    <name type="common">Wheat head blight fungus</name>
    <name type="synonym">Fusarium graminearum</name>
    <dbReference type="NCBI Taxonomy" id="229533"/>
    <lineage>
        <taxon>Eukaryota</taxon>
        <taxon>Fungi</taxon>
        <taxon>Dikarya</taxon>
        <taxon>Ascomycota</taxon>
        <taxon>Pezizomycotina</taxon>
        <taxon>Sordariomycetes</taxon>
        <taxon>Hypocreomycetidae</taxon>
        <taxon>Hypocreales</taxon>
        <taxon>Nectriaceae</taxon>
        <taxon>Fusarium</taxon>
    </lineage>
</organism>
<dbReference type="EC" id="2.3.1.-" evidence="14 15"/>
<dbReference type="EMBL" id="DQ019316">
    <property type="protein sequence ID" value="ABB90283.1"/>
    <property type="status" value="ALT_SEQ"/>
    <property type="molecule type" value="Genomic_DNA"/>
</dbReference>
<dbReference type="EMBL" id="DS231663">
    <property type="protein sequence ID" value="ESU07825.1"/>
    <property type="status" value="ALT_SEQ"/>
    <property type="molecule type" value="Genomic_DNA"/>
</dbReference>
<dbReference type="EMBL" id="HG970332">
    <property type="protein sequence ID" value="CEF74680.1"/>
    <property type="molecule type" value="Genomic_DNA"/>
</dbReference>
<dbReference type="RefSeq" id="XP_011318310.1">
    <property type="nucleotide sequence ID" value="XM_011320008.1"/>
</dbReference>
<dbReference type="SMR" id="A0A098D8A0"/>
<dbReference type="STRING" id="229533.A0A098D8A0"/>
<dbReference type="GeneID" id="23558941"/>
<dbReference type="KEGG" id="fgr:FGSG_12126"/>
<dbReference type="VEuPathDB" id="FungiDB:FGRAMPH1_01G05751"/>
<dbReference type="eggNOG" id="KOG1202">
    <property type="taxonomic scope" value="Eukaryota"/>
</dbReference>
<dbReference type="InParanoid" id="A0A098D8A0"/>
<dbReference type="OrthoDB" id="56108at110618"/>
<dbReference type="PHI-base" id="PHI:714"/>
<dbReference type="Proteomes" id="UP000070720">
    <property type="component" value="Chromosome 1"/>
</dbReference>
<dbReference type="GO" id="GO:0004315">
    <property type="term" value="F:3-oxoacyl-[acyl-carrier-protein] synthase activity"/>
    <property type="evidence" value="ECO:0007669"/>
    <property type="project" value="InterPro"/>
</dbReference>
<dbReference type="GO" id="GO:0004312">
    <property type="term" value="F:fatty acid synthase activity"/>
    <property type="evidence" value="ECO:0007669"/>
    <property type="project" value="TreeGrafter"/>
</dbReference>
<dbReference type="GO" id="GO:0016491">
    <property type="term" value="F:oxidoreductase activity"/>
    <property type="evidence" value="ECO:0007669"/>
    <property type="project" value="UniProtKB-KW"/>
</dbReference>
<dbReference type="GO" id="GO:0031177">
    <property type="term" value="F:phosphopantetheine binding"/>
    <property type="evidence" value="ECO:0007669"/>
    <property type="project" value="InterPro"/>
</dbReference>
<dbReference type="GO" id="GO:0016218">
    <property type="term" value="F:polyketide synthase activity"/>
    <property type="evidence" value="ECO:0000315"/>
    <property type="project" value="UniProt"/>
</dbReference>
<dbReference type="GO" id="GO:0006633">
    <property type="term" value="P:fatty acid biosynthetic process"/>
    <property type="evidence" value="ECO:0007669"/>
    <property type="project" value="InterPro"/>
</dbReference>
<dbReference type="GO" id="GO:0106150">
    <property type="term" value="P:zearalenone biosynthetic process"/>
    <property type="evidence" value="ECO:0000315"/>
    <property type="project" value="GO_Central"/>
</dbReference>
<dbReference type="CDD" id="cd05195">
    <property type="entry name" value="enoyl_red"/>
    <property type="match status" value="1"/>
</dbReference>
<dbReference type="CDD" id="cd00833">
    <property type="entry name" value="PKS"/>
    <property type="match status" value="1"/>
</dbReference>
<dbReference type="FunFam" id="3.40.50.720:FF:000209">
    <property type="entry name" value="Polyketide synthase Pks12"/>
    <property type="match status" value="1"/>
</dbReference>
<dbReference type="Gene3D" id="3.40.47.10">
    <property type="match status" value="1"/>
</dbReference>
<dbReference type="Gene3D" id="1.10.1200.10">
    <property type="entry name" value="ACP-like"/>
    <property type="match status" value="1"/>
</dbReference>
<dbReference type="Gene3D" id="3.40.366.10">
    <property type="entry name" value="Malonyl-Coenzyme A Acyl Carrier Protein, domain 2"/>
    <property type="match status" value="1"/>
</dbReference>
<dbReference type="Gene3D" id="3.90.180.10">
    <property type="entry name" value="Medium-chain alcohol dehydrogenases, catalytic domain"/>
    <property type="match status" value="1"/>
</dbReference>
<dbReference type="Gene3D" id="3.40.50.720">
    <property type="entry name" value="NAD(P)-binding Rossmann-like Domain"/>
    <property type="match status" value="2"/>
</dbReference>
<dbReference type="Gene3D" id="3.10.129.110">
    <property type="entry name" value="Polyketide synthase dehydratase"/>
    <property type="match status" value="1"/>
</dbReference>
<dbReference type="InterPro" id="IPR001227">
    <property type="entry name" value="Ac_transferase_dom_sf"/>
</dbReference>
<dbReference type="InterPro" id="IPR036736">
    <property type="entry name" value="ACP-like_sf"/>
</dbReference>
<dbReference type="InterPro" id="IPR014043">
    <property type="entry name" value="Acyl_transferase_dom"/>
</dbReference>
<dbReference type="InterPro" id="IPR016035">
    <property type="entry name" value="Acyl_Trfase/lysoPLipase"/>
</dbReference>
<dbReference type="InterPro" id="IPR013154">
    <property type="entry name" value="ADH-like_N"/>
</dbReference>
<dbReference type="InterPro" id="IPR011032">
    <property type="entry name" value="GroES-like_sf"/>
</dbReference>
<dbReference type="InterPro" id="IPR018201">
    <property type="entry name" value="Ketoacyl_synth_AS"/>
</dbReference>
<dbReference type="InterPro" id="IPR014031">
    <property type="entry name" value="Ketoacyl_synth_C"/>
</dbReference>
<dbReference type="InterPro" id="IPR014030">
    <property type="entry name" value="Ketoacyl_synth_N"/>
</dbReference>
<dbReference type="InterPro" id="IPR016036">
    <property type="entry name" value="Malonyl_transacylase_ACP-bd"/>
</dbReference>
<dbReference type="InterPro" id="IPR036291">
    <property type="entry name" value="NAD(P)-bd_dom_sf"/>
</dbReference>
<dbReference type="InterPro" id="IPR056501">
    <property type="entry name" value="NAD-bd_HRPKS_sdrA"/>
</dbReference>
<dbReference type="InterPro" id="IPR032821">
    <property type="entry name" value="PKS_assoc"/>
</dbReference>
<dbReference type="InterPro" id="IPR020841">
    <property type="entry name" value="PKS_Beta-ketoAc_synthase_dom"/>
</dbReference>
<dbReference type="InterPro" id="IPR042104">
    <property type="entry name" value="PKS_dehydratase_sf"/>
</dbReference>
<dbReference type="InterPro" id="IPR020807">
    <property type="entry name" value="PKS_DH"/>
</dbReference>
<dbReference type="InterPro" id="IPR049551">
    <property type="entry name" value="PKS_DH_C"/>
</dbReference>
<dbReference type="InterPro" id="IPR049552">
    <property type="entry name" value="PKS_DH_N"/>
</dbReference>
<dbReference type="InterPro" id="IPR020843">
    <property type="entry name" value="PKS_ER"/>
</dbReference>
<dbReference type="InterPro" id="IPR013968">
    <property type="entry name" value="PKS_KR"/>
</dbReference>
<dbReference type="InterPro" id="IPR049900">
    <property type="entry name" value="PKS_mFAS_DH"/>
</dbReference>
<dbReference type="InterPro" id="IPR050091">
    <property type="entry name" value="PKS_NRPS_Biosynth_Enz"/>
</dbReference>
<dbReference type="InterPro" id="IPR020806">
    <property type="entry name" value="PKS_PP-bd"/>
</dbReference>
<dbReference type="InterPro" id="IPR009081">
    <property type="entry name" value="PP-bd_ACP"/>
</dbReference>
<dbReference type="InterPro" id="IPR006162">
    <property type="entry name" value="Ppantetheine_attach_site"/>
</dbReference>
<dbReference type="InterPro" id="IPR016039">
    <property type="entry name" value="Thiolase-like"/>
</dbReference>
<dbReference type="PANTHER" id="PTHR43775:SF29">
    <property type="entry name" value="ASPERFURANONE POLYKETIDE SYNTHASE AFOG-RELATED"/>
    <property type="match status" value="1"/>
</dbReference>
<dbReference type="PANTHER" id="PTHR43775">
    <property type="entry name" value="FATTY ACID SYNTHASE"/>
    <property type="match status" value="1"/>
</dbReference>
<dbReference type="Pfam" id="PF23297">
    <property type="entry name" value="ACP_SdgA_C"/>
    <property type="match status" value="1"/>
</dbReference>
<dbReference type="Pfam" id="PF00698">
    <property type="entry name" value="Acyl_transf_1"/>
    <property type="match status" value="1"/>
</dbReference>
<dbReference type="Pfam" id="PF08240">
    <property type="entry name" value="ADH_N"/>
    <property type="match status" value="1"/>
</dbReference>
<dbReference type="Pfam" id="PF13602">
    <property type="entry name" value="ADH_zinc_N_2"/>
    <property type="match status" value="1"/>
</dbReference>
<dbReference type="Pfam" id="PF16197">
    <property type="entry name" value="KAsynt_C_assoc"/>
    <property type="match status" value="1"/>
</dbReference>
<dbReference type="Pfam" id="PF00109">
    <property type="entry name" value="ketoacyl-synt"/>
    <property type="match status" value="1"/>
</dbReference>
<dbReference type="Pfam" id="PF02801">
    <property type="entry name" value="Ketoacyl-synt_C"/>
    <property type="match status" value="1"/>
</dbReference>
<dbReference type="Pfam" id="PF08659">
    <property type="entry name" value="KR"/>
    <property type="match status" value="1"/>
</dbReference>
<dbReference type="Pfam" id="PF23114">
    <property type="entry name" value="NAD-bd_HRPKS_sdrA"/>
    <property type="match status" value="1"/>
</dbReference>
<dbReference type="Pfam" id="PF21089">
    <property type="entry name" value="PKS_DH_N"/>
    <property type="match status" value="1"/>
</dbReference>
<dbReference type="Pfam" id="PF14765">
    <property type="entry name" value="PS-DH"/>
    <property type="match status" value="1"/>
</dbReference>
<dbReference type="SMART" id="SM00827">
    <property type="entry name" value="PKS_AT"/>
    <property type="match status" value="1"/>
</dbReference>
<dbReference type="SMART" id="SM00826">
    <property type="entry name" value="PKS_DH"/>
    <property type="match status" value="1"/>
</dbReference>
<dbReference type="SMART" id="SM00829">
    <property type="entry name" value="PKS_ER"/>
    <property type="match status" value="1"/>
</dbReference>
<dbReference type="SMART" id="SM00822">
    <property type="entry name" value="PKS_KR"/>
    <property type="match status" value="1"/>
</dbReference>
<dbReference type="SMART" id="SM00825">
    <property type="entry name" value="PKS_KS"/>
    <property type="match status" value="1"/>
</dbReference>
<dbReference type="SMART" id="SM00823">
    <property type="entry name" value="PKS_PP"/>
    <property type="match status" value="1"/>
</dbReference>
<dbReference type="SUPFAM" id="SSF47336">
    <property type="entry name" value="ACP-like"/>
    <property type="match status" value="1"/>
</dbReference>
<dbReference type="SUPFAM" id="SSF52151">
    <property type="entry name" value="FabD/lysophospholipase-like"/>
    <property type="match status" value="1"/>
</dbReference>
<dbReference type="SUPFAM" id="SSF50129">
    <property type="entry name" value="GroES-like"/>
    <property type="match status" value="1"/>
</dbReference>
<dbReference type="SUPFAM" id="SSF51735">
    <property type="entry name" value="NAD(P)-binding Rossmann-fold domains"/>
    <property type="match status" value="2"/>
</dbReference>
<dbReference type="SUPFAM" id="SSF55048">
    <property type="entry name" value="Probable ACP-binding domain of malonyl-CoA ACP transacylase"/>
    <property type="match status" value="1"/>
</dbReference>
<dbReference type="SUPFAM" id="SSF53901">
    <property type="entry name" value="Thiolase-like"/>
    <property type="match status" value="1"/>
</dbReference>
<dbReference type="PROSITE" id="PS50075">
    <property type="entry name" value="CARRIER"/>
    <property type="match status" value="1"/>
</dbReference>
<dbReference type="PROSITE" id="PS00606">
    <property type="entry name" value="KS3_1"/>
    <property type="match status" value="1"/>
</dbReference>
<dbReference type="PROSITE" id="PS52004">
    <property type="entry name" value="KS3_2"/>
    <property type="match status" value="1"/>
</dbReference>
<dbReference type="PROSITE" id="PS00012">
    <property type="entry name" value="PHOSPHOPANTETHEINE"/>
    <property type="match status" value="1"/>
</dbReference>
<dbReference type="PROSITE" id="PS52019">
    <property type="entry name" value="PKS_MFAS_DH"/>
    <property type="match status" value="1"/>
</dbReference>
<reference key="1">
    <citation type="journal article" date="2005" name="Mol. Microbiol.">
        <title>Two different polyketide synthase genes are required for synthesis of zearalenone in Gibberella zeae.</title>
        <authorList>
            <person name="Kim Y.T."/>
            <person name="Lee Y.R."/>
            <person name="Jin J."/>
            <person name="Han K.H."/>
            <person name="Kim H."/>
            <person name="Kim J.C."/>
            <person name="Lee T."/>
            <person name="Yun S.H."/>
            <person name="Lee Y.W."/>
        </authorList>
    </citation>
    <scope>NUCLEOTIDE SEQUENCE [GENOMIC DNA]</scope>
    <scope>FUNCTION</scope>
    <scope>DISRUPTION PHENOTYPE</scope>
    <scope>INDUCTION</scope>
    <scope>PATHWAY</scope>
    <source>
        <strain>ATCC MYA-4620 / CBS 123657 / FGSC 9075 / NRRL 31084 / PH-1</strain>
    </source>
</reference>
<reference key="2">
    <citation type="journal article" date="2007" name="Science">
        <title>The Fusarium graminearum genome reveals a link between localized polymorphism and pathogen specialization.</title>
        <authorList>
            <person name="Cuomo C.A."/>
            <person name="Gueldener U."/>
            <person name="Xu J.-R."/>
            <person name="Trail F."/>
            <person name="Turgeon B.G."/>
            <person name="Di Pietro A."/>
            <person name="Walton J.D."/>
            <person name="Ma L.-J."/>
            <person name="Baker S.E."/>
            <person name="Rep M."/>
            <person name="Adam G."/>
            <person name="Antoniw J."/>
            <person name="Baldwin T."/>
            <person name="Calvo S.E."/>
            <person name="Chang Y.-L."/>
            <person name="DeCaprio D."/>
            <person name="Gale L.R."/>
            <person name="Gnerre S."/>
            <person name="Goswami R.S."/>
            <person name="Hammond-Kosack K."/>
            <person name="Harris L.J."/>
            <person name="Hilburn K."/>
            <person name="Kennell J.C."/>
            <person name="Kroken S."/>
            <person name="Magnuson J.K."/>
            <person name="Mannhaupt G."/>
            <person name="Mauceli E.W."/>
            <person name="Mewes H.-W."/>
            <person name="Mitterbauer R."/>
            <person name="Muehlbauer G."/>
            <person name="Muensterkoetter M."/>
            <person name="Nelson D."/>
            <person name="O'Donnell K."/>
            <person name="Ouellet T."/>
            <person name="Qi W."/>
            <person name="Quesneville H."/>
            <person name="Roncero M.I.G."/>
            <person name="Seong K.-Y."/>
            <person name="Tetko I.V."/>
            <person name="Urban M."/>
            <person name="Waalwijk C."/>
            <person name="Ward T.J."/>
            <person name="Yao J."/>
            <person name="Birren B.W."/>
            <person name="Kistler H.C."/>
        </authorList>
    </citation>
    <scope>NUCLEOTIDE SEQUENCE [LARGE SCALE GENOMIC DNA]</scope>
    <source>
        <strain>ATCC MYA-4620 / CBS 123657 / FGSC 9075 / NRRL 31084 / PH-1</strain>
    </source>
</reference>
<reference key="3">
    <citation type="journal article" date="2010" name="Nature">
        <title>Comparative genomics reveals mobile pathogenicity chromosomes in Fusarium.</title>
        <authorList>
            <person name="Ma L.-J."/>
            <person name="van der Does H.C."/>
            <person name="Borkovich K.A."/>
            <person name="Coleman J.J."/>
            <person name="Daboussi M.-J."/>
            <person name="Di Pietro A."/>
            <person name="Dufresne M."/>
            <person name="Freitag M."/>
            <person name="Grabherr M."/>
            <person name="Henrissat B."/>
            <person name="Houterman P.M."/>
            <person name="Kang S."/>
            <person name="Shim W.-B."/>
            <person name="Woloshuk C."/>
            <person name="Xie X."/>
            <person name="Xu J.-R."/>
            <person name="Antoniw J."/>
            <person name="Baker S.E."/>
            <person name="Bluhm B.H."/>
            <person name="Breakspear A."/>
            <person name="Brown D.W."/>
            <person name="Butchko R.A.E."/>
            <person name="Chapman S."/>
            <person name="Coulson R."/>
            <person name="Coutinho P.M."/>
            <person name="Danchin E.G.J."/>
            <person name="Diener A."/>
            <person name="Gale L.R."/>
            <person name="Gardiner D.M."/>
            <person name="Goff S."/>
            <person name="Hammond-Kosack K.E."/>
            <person name="Hilburn K."/>
            <person name="Hua-Van A."/>
            <person name="Jonkers W."/>
            <person name="Kazan K."/>
            <person name="Kodira C.D."/>
            <person name="Koehrsen M."/>
            <person name="Kumar L."/>
            <person name="Lee Y.-H."/>
            <person name="Li L."/>
            <person name="Manners J.M."/>
            <person name="Miranda-Saavedra D."/>
            <person name="Mukherjee M."/>
            <person name="Park G."/>
            <person name="Park J."/>
            <person name="Park S.-Y."/>
            <person name="Proctor R.H."/>
            <person name="Regev A."/>
            <person name="Ruiz-Roldan M.C."/>
            <person name="Sain D."/>
            <person name="Sakthikumar S."/>
            <person name="Sykes S."/>
            <person name="Schwartz D.C."/>
            <person name="Turgeon B.G."/>
            <person name="Wapinski I."/>
            <person name="Yoder O."/>
            <person name="Young S."/>
            <person name="Zeng Q."/>
            <person name="Zhou S."/>
            <person name="Galagan J."/>
            <person name="Cuomo C.A."/>
            <person name="Kistler H.C."/>
            <person name="Rep M."/>
        </authorList>
    </citation>
    <scope>GENOME REANNOTATION</scope>
    <source>
        <strain>ATCC MYA-4620 / CBS 123657 / FGSC 9075 / NRRL 31084 / PH-1</strain>
    </source>
</reference>
<reference key="4">
    <citation type="journal article" date="2015" name="BMC Genomics">
        <title>The completed genome sequence of the pathogenic ascomycete fungus Fusarium graminearum.</title>
        <authorList>
            <person name="King R."/>
            <person name="Urban M."/>
            <person name="Hammond-Kosack M.C.U."/>
            <person name="Hassani-Pak K."/>
            <person name="Hammond-Kosack K.E."/>
        </authorList>
    </citation>
    <scope>NUCLEOTIDE SEQUENCE [LARGE SCALE GENOMIC DNA]</scope>
    <source>
        <strain>ATCC MYA-4620 / CBS 123657 / FGSC 9075 / NRRL 31084 / PH-1</strain>
    </source>
</reference>
<reference key="5">
    <citation type="journal article" date="2006" name="Appl. Environ. Microbiol.">
        <title>Characterization of two polyketide synthase genes involved in zearalenone biosynthesis in Gibberella zeae.</title>
        <authorList>
            <person name="Gaffoor I."/>
            <person name="Trail F."/>
        </authorList>
    </citation>
    <scope>FUNCTION</scope>
    <scope>DISRUPTION PHENOTYPE</scope>
</reference>
<reference key="6">
    <citation type="journal article" date="2006" name="Appl. Environ. Microbiol.">
        <title>The PKS4 gene of Fusarium graminearum is essential for zearalenone production.</title>
        <authorList>
            <person name="Lysoee E."/>
            <person name="Klemsdal S.S."/>
            <person name="Bone K.R."/>
            <person name="Frandsen R.J."/>
            <person name="Johansen T."/>
            <person name="Thrane U."/>
            <person name="Giese H."/>
        </authorList>
    </citation>
    <scope>FUNCTION</scope>
    <scope>DISRUPTION PHENOTYPE</scope>
</reference>
<reference key="7">
    <citation type="journal article" date="2008" name="Proc. Natl. Acad. Sci. U.S.A.">
        <title>A polyketide macrolactone synthase from the filamentous fungus Gibberella zeae.</title>
        <authorList>
            <person name="Zhou H."/>
            <person name="Zhan J."/>
            <person name="Watanabe K."/>
            <person name="Xie X."/>
            <person name="Tang Y."/>
        </authorList>
    </citation>
    <scope>FUNCTION</scope>
</reference>
<comment type="function">
    <text evidence="6 8 9 10">Highly reducing polyketide synthase; part of the gene cluster that mediates the biosynthesis of zearalenone (ZEA), a nonsteroid estrogen that is a contaminant of cereal grains and causes estrogenic disorders in humans and animals (PubMed:16262793, PubMed:16517624, PubMed:18427109). The ZEA backbone is synthesized from a single acetyl-CoA molecule and eight malonyl-CoA molecules (PubMed:16262793, PubMed:16517624, PubMed:18427109). The reducing polyketide synthase ZEA2 is proposed to synthesize a reduced hexaketide intermediate by using different combinations of its reductive domains during each round of condensation (PubMed:16262793, PubMed:16517624, PubMed:16751498, PubMed:18427109). The hexaketide thioester is then transacylated to the non-reducing polyketide synthase ZEA1 and is further condensed with three malonyl-CoAs without reductive tailoring to yield a mixed reduced/unreduced nonaketide (PubMed:16262793, PubMed:16517624, PubMed:18427109). ZEA1 must be able to interact with ZEA2 to facilitate starter-unit acyltransfer and initiate polyketide biosynthesis (PubMed:18427109). ZEA1 also mediates the required C2-C7 cyclization to form the resorcylate core and catalyzes the formation of the macrolactone (PubMed:18427109). ZEB1 is then responsible for the chemical conversion of beta-zearalenonol (beta-ZOL) to ZEA in the biosynthetic pathway (PubMed:16262793).</text>
</comment>
<comment type="pathway">
    <text evidence="6">Mycotoxin biosynthesis.</text>
</comment>
<comment type="induction">
    <text evidence="6">Expression is positively regulated by the zearalenone biosynthesis specific transcription factor ZEB2 (PubMed:16262793). Conditions for carbon-, nitrogen-, or phosphorus-starvations lead to very low expression (PubMed:16262793). Increase in pH results in gradual reduction of the gene expression (PubMed:16262793).</text>
</comment>
<comment type="disruption phenotype">
    <text evidence="6 7 8">Results in the loss of zearalenone production but still produces beta-zearalenonol (PubMed:16262793, PubMed:16517624, PubMed:16751498).</text>
</comment>
<comment type="sequence caution" evidence="13">
    <conflict type="erroneous gene model prediction">
        <sequence resource="EMBL-CDS" id="ABB90283"/>
    </conflict>
</comment>
<comment type="sequence caution" evidence="13">
    <conflict type="erroneous gene model prediction">
        <sequence resource="EMBL-CDS" id="ESU07825"/>
    </conflict>
</comment>
<sequence>MSVDNKQVPGPVAIVGLACRFPGDATSPSKFWDLLKSGKDAYSETTDRYNAQAFYHPNSKRQNVLPVTGGHFLKQDPHVFDAAFFNITAAEAISLDPKQRIALEVAYEAFENAGKPLKQVAGTTTACFVGSSMSDYRDAVVRDFAHNPKYHVLGTCEEMIANRISHFFDIHGPSATVHTACSSSLVAIHLACQSLLSGDAEMALAGGVGMILTPDGTMQLNNLGFLNPEGHSRSFDKDAGGYGRGEGCGILVLKKLDKAIQDGDNIRAVIRASGVNSDGWTQGVTMPSSEAQAALIKHVYETRGLDYGATQYVEAHGTGTKAGDPVETGAIHRTIGQGASKNRKLWVGSVKPNIGHLEAAAGVASVIKGVLAMENSLIPPNIHFASPNPEIPLDEWNMAVPTKLTPWPAARTKRMSVSGFGMGGTNGHVVLEAFNSTPQSILYGDAQYQPAHNGKRLFTFSSHDQAGLDRVSKSLVDHLDSLGPAGARPEYLADLGYSLSVGKSGLSWKTAHLAESLTELREKLSSPQSEHAVREPRSQPKIGFVFTGQGAQWARMGVEMLHRPVFKESVQRSTDYLQQLGCDWTPIVELSRAQKESRLTLPEISQPICSVLQIALVDELRSWGVAPVSVVGHSSGEIAAAYCIEALSHKDAIAVAYFRGKVSAGLNHLNGGMMAVGCSRAEAETLIDESDLQGGHVTVACVNSPSNVTLSGDVAPLDQLKGILEKRGIFARRLRVEVAYHSTHMNSVFADYTASIADIEPQSCPSHQPIMVSSVTNNQVDPALLGSYYWGRNLISPVLFSDTIKEMVSPADGNGQKAVDLLVEIGPHGALGGPIEQILSHFDIENVGYQSMLTRGQNAVETSLELATSLFLQGVAIDIQKVNGDSGCRLLTNLPPYPWNHSKKFRAESRLQRELIAQSTPTRSIIGAPVPKMNESQRVWRGFIRLDDEPWIRGHTVGTTVLFPGAGMVSIVLEAAQQMVDPGKVARAFRLRDVSFSAAMALPEDQATEVIIQMKPQLVATSGSTPATWWEFTVSSCAGTDQLRDNCRGLITIDYEGNTSQQMAHEDSQVVSGRISDYHQILEECPATYAKDRFYKHMMKAAWRYGETFQGVENCHPGDGKTVFDVKLIDIGETFSKGQLDRPFLIHGATLDAVFQGWLGSTYKNGTFEFDKPFVPTKIGEMEISFNVPSEAGYMMPGLCRSHRSGFNELSADTIMFDKDLSRVILSVIDFRTSELEMDGAATEETTVEVDPADITSKVLWDYSLSLMEPCDLKQVMGSIVAQNSLTDFVRMLLHDNPAANIVEFISRSDGLPNTYASKLPPGTILPTQIRYAVVDETEDVGDENAASSMLTIDALVDSVSASGATADIVVIPQGFQFQDNYAKILEPLAKVSKPNTTIVVAVDTPDTTVPLKAKGFQLLHSIQGTPSLEVFAGLTGEQEKPTNGIHKEEVVLLLPSMLSTVTKEFAEEVQLDLEGQGFSVSTESLAESIDDSTFDGKTCVSLLEVERPLLDSLSESDFQLIRKVVLTSQRILWVTHGESPSLALVDGFSRCIMSEIEGVKFQVLHLSEPTGLQHGPRLAAKVIASKASDNEFRDKDGLLQVARIFKGLTENENIRHHLHDDVRVTRLSNQEHPLRLTIGKPGLLDTLYFVDDERVLAPLADHEVEIQVKATGLNFRDVMASMALVPVKGLGQEASGIVLRTGRDATHLKPGDRVSTLDMGTHATVMRADHRVTVKIPDAMSFEEAAAVPVVHTTAYYALVRLAKLQRGQSVLIHAAAGGVGQAALQLANHLGLVVYATVGSDDKRKLLTDTYQVSEDHIFNSRDASFAKGIMRVTGGRGVDCVLNSLSGELLRVSWSCLATFGTFVEIGLRDITNNMLLDMRPFSKSTTFSFINMYTLFEEDPSALGDILEEVFKLLGGGILQTPSPMTVYPINQVEDAFRIMQQGKHRGKIVLSFPDDAQAPVLHVAKNSMKLDSQATYLFVGGLGGLGRSLAKEFVSCGAKNIAFISRSGDSTSEAKATIKEITSRGANVKAYAADISNETAFLNAMKECSREFPPIKGVVQMAMVLRDVVFEKMTYEEWKLPLKPKVQGSWNLHKYFDHERPLDFMVICSSSSGIYGYPSQAQYAAGNTYQDALAHYRRAQGLRAVSVNLGIMRDVGVLAEQGTSGNIKLWEEVLGIREPAFHALMKSLIKGQTDNNSEFPAQICTGLGTADIMATHGLAKPTYFQDPRFGPLAVTSLSSDASGDKQSTAMSISSQLSEASSKAKATEIITNALIGKVADILQMPQSEVDPGQPLYRYGVDSLVALEVRNWITREMKVNVALLEILAAVPMESFAGKLASTSKLVTVS</sequence>
<accession>A0A098D8A0</accession>
<accession>A0A0E0RTV5</accession>
<accession>I1S5K5</accession>
<accession>Q2VLJ2</accession>
<proteinExistence type="evidence at transcript level"/>
<evidence type="ECO:0000255" key="1"/>
<evidence type="ECO:0000255" key="2">
    <source>
        <dbReference type="PROSITE-ProRule" id="PRU00258"/>
    </source>
</evidence>
<evidence type="ECO:0000255" key="3">
    <source>
        <dbReference type="PROSITE-ProRule" id="PRU01348"/>
    </source>
</evidence>
<evidence type="ECO:0000255" key="4">
    <source>
        <dbReference type="PROSITE-ProRule" id="PRU01363"/>
    </source>
</evidence>
<evidence type="ECO:0000255" key="5">
    <source>
        <dbReference type="PROSITE-ProRule" id="PRU10022"/>
    </source>
</evidence>
<evidence type="ECO:0000269" key="6">
    <source>
    </source>
</evidence>
<evidence type="ECO:0000269" key="7">
    <source>
    </source>
</evidence>
<evidence type="ECO:0000269" key="8">
    <source>
    </source>
</evidence>
<evidence type="ECO:0000269" key="9">
    <source>
    </source>
</evidence>
<evidence type="ECO:0000269" key="10">
    <source>
    </source>
</evidence>
<evidence type="ECO:0000303" key="11">
    <source>
    </source>
</evidence>
<evidence type="ECO:0000303" key="12">
    <source>
    </source>
</evidence>
<evidence type="ECO:0000305" key="13"/>
<evidence type="ECO:0000305" key="14">
    <source>
    </source>
</evidence>
<evidence type="ECO:0000305" key="15">
    <source>
    </source>
</evidence>
<protein>
    <recommendedName>
        <fullName evidence="13">Highly reducing polyketide synthase ZEA2</fullName>
        <ecNumber evidence="14 15">2.3.1.-</ecNumber>
    </recommendedName>
    <alternativeName>
        <fullName evidence="11">Polyketide synthase 4</fullName>
        <shortName evidence="11">PKS4</shortName>
    </alternativeName>
    <alternativeName>
        <fullName evidence="12">Zearalenone biosynthesis polyketide synthase 2</fullName>
    </alternativeName>
</protein>